<feature type="chain" id="PRO_0000224867" description="Holliday junction branch migration complex subunit RuvA">
    <location>
        <begin position="1"/>
        <end position="191"/>
    </location>
</feature>
<feature type="region of interest" description="Domain I" evidence="1">
    <location>
        <begin position="1"/>
        <end position="64"/>
    </location>
</feature>
<feature type="region of interest" description="Domain II" evidence="1">
    <location>
        <begin position="65"/>
        <end position="142"/>
    </location>
</feature>
<feature type="region of interest" description="Flexible linker" evidence="1">
    <location>
        <begin position="143"/>
        <end position="146"/>
    </location>
</feature>
<feature type="region of interest" description="Domain III" evidence="1">
    <location>
        <begin position="146"/>
        <end position="191"/>
    </location>
</feature>
<gene>
    <name evidence="1" type="primary">ruvA</name>
    <name type="ordered locus">Erum6760</name>
    <name type="ordered locus">ERWE_CDS_07090</name>
</gene>
<dbReference type="EMBL" id="CR767821">
    <property type="protein sequence ID" value="CAH58408.1"/>
    <property type="molecule type" value="Genomic_DNA"/>
</dbReference>
<dbReference type="EMBL" id="CR925678">
    <property type="protein sequence ID" value="CAI27203.1"/>
    <property type="molecule type" value="Genomic_DNA"/>
</dbReference>
<dbReference type="RefSeq" id="WP_011155355.1">
    <property type="nucleotide sequence ID" value="NC_005295.2"/>
</dbReference>
<dbReference type="SMR" id="Q5HAK5"/>
<dbReference type="GeneID" id="33057699"/>
<dbReference type="KEGG" id="eru:Erum6760"/>
<dbReference type="KEGG" id="erw:ERWE_CDS_07090"/>
<dbReference type="eggNOG" id="COG0632">
    <property type="taxonomic scope" value="Bacteria"/>
</dbReference>
<dbReference type="HOGENOM" id="CLU_087936_3_0_5"/>
<dbReference type="Proteomes" id="UP000001021">
    <property type="component" value="Chromosome"/>
</dbReference>
<dbReference type="GO" id="GO:0005737">
    <property type="term" value="C:cytoplasm"/>
    <property type="evidence" value="ECO:0007669"/>
    <property type="project" value="UniProtKB-SubCell"/>
</dbReference>
<dbReference type="GO" id="GO:0009379">
    <property type="term" value="C:Holliday junction helicase complex"/>
    <property type="evidence" value="ECO:0007669"/>
    <property type="project" value="InterPro"/>
</dbReference>
<dbReference type="GO" id="GO:0048476">
    <property type="term" value="C:Holliday junction resolvase complex"/>
    <property type="evidence" value="ECO:0007669"/>
    <property type="project" value="UniProtKB-UniRule"/>
</dbReference>
<dbReference type="GO" id="GO:0005524">
    <property type="term" value="F:ATP binding"/>
    <property type="evidence" value="ECO:0007669"/>
    <property type="project" value="InterPro"/>
</dbReference>
<dbReference type="GO" id="GO:0000400">
    <property type="term" value="F:four-way junction DNA binding"/>
    <property type="evidence" value="ECO:0007669"/>
    <property type="project" value="UniProtKB-UniRule"/>
</dbReference>
<dbReference type="GO" id="GO:0009378">
    <property type="term" value="F:four-way junction helicase activity"/>
    <property type="evidence" value="ECO:0007669"/>
    <property type="project" value="InterPro"/>
</dbReference>
<dbReference type="GO" id="GO:0006310">
    <property type="term" value="P:DNA recombination"/>
    <property type="evidence" value="ECO:0007669"/>
    <property type="project" value="UniProtKB-UniRule"/>
</dbReference>
<dbReference type="GO" id="GO:0006281">
    <property type="term" value="P:DNA repair"/>
    <property type="evidence" value="ECO:0007669"/>
    <property type="project" value="UniProtKB-UniRule"/>
</dbReference>
<dbReference type="CDD" id="cd14332">
    <property type="entry name" value="UBA_RuvA_C"/>
    <property type="match status" value="1"/>
</dbReference>
<dbReference type="Gene3D" id="1.10.150.20">
    <property type="entry name" value="5' to 3' exonuclease, C-terminal subdomain"/>
    <property type="match status" value="1"/>
</dbReference>
<dbReference type="Gene3D" id="1.10.8.10">
    <property type="entry name" value="DNA helicase RuvA subunit, C-terminal domain"/>
    <property type="match status" value="1"/>
</dbReference>
<dbReference type="Gene3D" id="2.40.50.140">
    <property type="entry name" value="Nucleic acid-binding proteins"/>
    <property type="match status" value="1"/>
</dbReference>
<dbReference type="HAMAP" id="MF_00031">
    <property type="entry name" value="DNA_HJ_migration_RuvA"/>
    <property type="match status" value="1"/>
</dbReference>
<dbReference type="InterPro" id="IPR013849">
    <property type="entry name" value="DNA_helicase_Holl-junc_RuvA_I"/>
</dbReference>
<dbReference type="InterPro" id="IPR012340">
    <property type="entry name" value="NA-bd_OB-fold"/>
</dbReference>
<dbReference type="InterPro" id="IPR000085">
    <property type="entry name" value="RuvA"/>
</dbReference>
<dbReference type="InterPro" id="IPR010994">
    <property type="entry name" value="RuvA_2-like"/>
</dbReference>
<dbReference type="InterPro" id="IPR011114">
    <property type="entry name" value="RuvA_C"/>
</dbReference>
<dbReference type="InterPro" id="IPR036267">
    <property type="entry name" value="RuvA_C_sf"/>
</dbReference>
<dbReference type="NCBIfam" id="NF011194">
    <property type="entry name" value="PRK14600.1"/>
    <property type="match status" value="1"/>
</dbReference>
<dbReference type="NCBIfam" id="TIGR00084">
    <property type="entry name" value="ruvA"/>
    <property type="match status" value="1"/>
</dbReference>
<dbReference type="Pfam" id="PF14520">
    <property type="entry name" value="HHH_5"/>
    <property type="match status" value="1"/>
</dbReference>
<dbReference type="Pfam" id="PF07499">
    <property type="entry name" value="RuvA_C"/>
    <property type="match status" value="1"/>
</dbReference>
<dbReference type="Pfam" id="PF01330">
    <property type="entry name" value="RuvA_N"/>
    <property type="match status" value="1"/>
</dbReference>
<dbReference type="SUPFAM" id="SSF46929">
    <property type="entry name" value="DNA helicase RuvA subunit, C-terminal domain"/>
    <property type="match status" value="1"/>
</dbReference>
<dbReference type="SUPFAM" id="SSF50249">
    <property type="entry name" value="Nucleic acid-binding proteins"/>
    <property type="match status" value="1"/>
</dbReference>
<dbReference type="SUPFAM" id="SSF47781">
    <property type="entry name" value="RuvA domain 2-like"/>
    <property type="match status" value="1"/>
</dbReference>
<organism>
    <name type="scientific">Ehrlichia ruminantium (strain Welgevonden)</name>
    <dbReference type="NCBI Taxonomy" id="254945"/>
    <lineage>
        <taxon>Bacteria</taxon>
        <taxon>Pseudomonadati</taxon>
        <taxon>Pseudomonadota</taxon>
        <taxon>Alphaproteobacteria</taxon>
        <taxon>Rickettsiales</taxon>
        <taxon>Anaplasmataceae</taxon>
        <taxon>Ehrlichia</taxon>
    </lineage>
</organism>
<proteinExistence type="inferred from homology"/>
<evidence type="ECO:0000255" key="1">
    <source>
        <dbReference type="HAMAP-Rule" id="MF_00031"/>
    </source>
</evidence>
<reference key="1">
    <citation type="journal article" date="2005" name="Proc. Natl. Acad. Sci. U.S.A.">
        <title>The genome of the heartwater agent Ehrlichia ruminantium contains multiple tandem repeats of actively variable copy number.</title>
        <authorList>
            <person name="Collins N.E."/>
            <person name="Liebenberg J."/>
            <person name="de Villiers E.P."/>
            <person name="Brayton K.A."/>
            <person name="Louw E."/>
            <person name="Pretorius A."/>
            <person name="Faber F.E."/>
            <person name="van Heerden H."/>
            <person name="Josemans A."/>
            <person name="van Kleef M."/>
            <person name="Steyn H.C."/>
            <person name="van Strijp M.F."/>
            <person name="Zweygarth E."/>
            <person name="Jongejan F."/>
            <person name="Maillard J.C."/>
            <person name="Berthier D."/>
            <person name="Botha M."/>
            <person name="Joubert F."/>
            <person name="Corton C.H."/>
            <person name="Thomson N.R."/>
            <person name="Allsopp M.T."/>
            <person name="Allsopp B.A."/>
        </authorList>
    </citation>
    <scope>NUCLEOTIDE SEQUENCE [LARGE SCALE GENOMIC DNA]</scope>
    <source>
        <strain>Welgevonden</strain>
    </source>
</reference>
<reference key="2">
    <citation type="journal article" date="2006" name="J. Bacteriol.">
        <title>Comparative genomic analysis of three strains of Ehrlichia ruminantium reveals an active process of genome size plasticity.</title>
        <authorList>
            <person name="Frutos R."/>
            <person name="Viari A."/>
            <person name="Ferraz C."/>
            <person name="Morgat A."/>
            <person name="Eychenie S."/>
            <person name="Kandassamy Y."/>
            <person name="Chantal I."/>
            <person name="Bensaid A."/>
            <person name="Coissac E."/>
            <person name="Vachiery N."/>
            <person name="Demaille J."/>
            <person name="Martinez D."/>
        </authorList>
    </citation>
    <scope>NUCLEOTIDE SEQUENCE [LARGE SCALE GENOMIC DNA]</scope>
    <source>
        <strain>Welgevonden</strain>
    </source>
</reference>
<name>RUVA_EHRRW</name>
<keyword id="KW-0963">Cytoplasm</keyword>
<keyword id="KW-0227">DNA damage</keyword>
<keyword id="KW-0233">DNA recombination</keyword>
<keyword id="KW-0234">DNA repair</keyword>
<keyword id="KW-0238">DNA-binding</keyword>
<sequence length="191" mass="21513">MIGSITGNVEEIRDSYIILNVGNIGYIIYVSHKVLQTCKVGDNIKLYIETYVNRDNITQLYGFLNRQEQDYLKMLVTINGINYKTALSILSKLSPEQIFSAVVNNDKIAFKGNGIGEKLAGRIITELQYKINKMPIEETFSIIENDDSLAALISLGYEKLKAFNVIQEIKSKTPDASTQEVIRKALQKLSQ</sequence>
<accession>Q5HAK5</accession>
<accession>Q5FDF9</accession>
<comment type="function">
    <text evidence="1">The RuvA-RuvB-RuvC complex processes Holliday junction (HJ) DNA during genetic recombination and DNA repair, while the RuvA-RuvB complex plays an important role in the rescue of blocked DNA replication forks via replication fork reversal (RFR). RuvA specifically binds to HJ cruciform DNA, conferring on it an open structure. The RuvB hexamer acts as an ATP-dependent pump, pulling dsDNA into and through the RuvAB complex. HJ branch migration allows RuvC to scan DNA until it finds its consensus sequence, where it cleaves and resolves the cruciform DNA.</text>
</comment>
<comment type="subunit">
    <text evidence="1">Homotetramer. Forms an RuvA(8)-RuvB(12)-Holliday junction (HJ) complex. HJ DNA is sandwiched between 2 RuvA tetramers; dsDNA enters through RuvA and exits via RuvB. An RuvB hexamer assembles on each DNA strand where it exits the tetramer. Each RuvB hexamer is contacted by two RuvA subunits (via domain III) on 2 adjacent RuvB subunits; this complex drives branch migration. In the full resolvosome a probable DNA-RuvA(4)-RuvB(12)-RuvC(2) complex forms which resolves the HJ.</text>
</comment>
<comment type="subcellular location">
    <subcellularLocation>
        <location evidence="1">Cytoplasm</location>
    </subcellularLocation>
</comment>
<comment type="domain">
    <text evidence="1">Has three domains with a flexible linker between the domains II and III and assumes an 'L' shape. Domain III is highly mobile and contacts RuvB.</text>
</comment>
<comment type="similarity">
    <text evidence="1">Belongs to the RuvA family.</text>
</comment>
<protein>
    <recommendedName>
        <fullName evidence="1">Holliday junction branch migration complex subunit RuvA</fullName>
    </recommendedName>
</protein>